<feature type="chain" id="PRO_0000241074" description="Glutamyl-tRNA(Gln) amidotransferase subunit A">
    <location>
        <begin position="1"/>
        <end position="496"/>
    </location>
</feature>
<feature type="active site" description="Charge relay system" evidence="1">
    <location>
        <position position="79"/>
    </location>
</feature>
<feature type="active site" description="Charge relay system" evidence="1">
    <location>
        <position position="159"/>
    </location>
</feature>
<feature type="active site" description="Acyl-ester intermediate" evidence="1">
    <location>
        <position position="183"/>
    </location>
</feature>
<dbReference type="EC" id="6.3.5.7" evidence="1"/>
<dbReference type="EMBL" id="BX897700">
    <property type="protein sequence ID" value="CAF26125.1"/>
    <property type="molecule type" value="Genomic_DNA"/>
</dbReference>
<dbReference type="RefSeq" id="WP_011179388.1">
    <property type="nucleotide sequence ID" value="NC_005955.1"/>
</dbReference>
<dbReference type="SMR" id="Q6FZS9"/>
<dbReference type="KEGG" id="bqu:BQ06340"/>
<dbReference type="eggNOG" id="COG0154">
    <property type="taxonomic scope" value="Bacteria"/>
</dbReference>
<dbReference type="HOGENOM" id="CLU_009600_0_3_5"/>
<dbReference type="OrthoDB" id="9811471at2"/>
<dbReference type="Proteomes" id="UP000000597">
    <property type="component" value="Chromosome"/>
</dbReference>
<dbReference type="GO" id="GO:0030956">
    <property type="term" value="C:glutamyl-tRNA(Gln) amidotransferase complex"/>
    <property type="evidence" value="ECO:0007669"/>
    <property type="project" value="InterPro"/>
</dbReference>
<dbReference type="GO" id="GO:0005524">
    <property type="term" value="F:ATP binding"/>
    <property type="evidence" value="ECO:0007669"/>
    <property type="project" value="UniProtKB-KW"/>
</dbReference>
<dbReference type="GO" id="GO:0050567">
    <property type="term" value="F:glutaminyl-tRNA synthase (glutamine-hydrolyzing) activity"/>
    <property type="evidence" value="ECO:0007669"/>
    <property type="project" value="UniProtKB-UniRule"/>
</dbReference>
<dbReference type="GO" id="GO:0006412">
    <property type="term" value="P:translation"/>
    <property type="evidence" value="ECO:0007669"/>
    <property type="project" value="UniProtKB-UniRule"/>
</dbReference>
<dbReference type="Gene3D" id="3.90.1300.10">
    <property type="entry name" value="Amidase signature (AS) domain"/>
    <property type="match status" value="1"/>
</dbReference>
<dbReference type="HAMAP" id="MF_00120">
    <property type="entry name" value="GatA"/>
    <property type="match status" value="1"/>
</dbReference>
<dbReference type="InterPro" id="IPR000120">
    <property type="entry name" value="Amidase"/>
</dbReference>
<dbReference type="InterPro" id="IPR020556">
    <property type="entry name" value="Amidase_CS"/>
</dbReference>
<dbReference type="InterPro" id="IPR023631">
    <property type="entry name" value="Amidase_dom"/>
</dbReference>
<dbReference type="InterPro" id="IPR036928">
    <property type="entry name" value="AS_sf"/>
</dbReference>
<dbReference type="InterPro" id="IPR004412">
    <property type="entry name" value="GatA"/>
</dbReference>
<dbReference type="NCBIfam" id="TIGR00132">
    <property type="entry name" value="gatA"/>
    <property type="match status" value="1"/>
</dbReference>
<dbReference type="PANTHER" id="PTHR11895:SF151">
    <property type="entry name" value="GLUTAMYL-TRNA(GLN) AMIDOTRANSFERASE SUBUNIT A"/>
    <property type="match status" value="1"/>
</dbReference>
<dbReference type="PANTHER" id="PTHR11895">
    <property type="entry name" value="TRANSAMIDASE"/>
    <property type="match status" value="1"/>
</dbReference>
<dbReference type="Pfam" id="PF01425">
    <property type="entry name" value="Amidase"/>
    <property type="match status" value="1"/>
</dbReference>
<dbReference type="SUPFAM" id="SSF75304">
    <property type="entry name" value="Amidase signature (AS) enzymes"/>
    <property type="match status" value="1"/>
</dbReference>
<dbReference type="PROSITE" id="PS00571">
    <property type="entry name" value="AMIDASES"/>
    <property type="match status" value="1"/>
</dbReference>
<proteinExistence type="inferred from homology"/>
<sequence length="496" mass="53507">MTDLTTLTIAQARYALTKREFKATELTEAYLKAIELANPTLNTYVAITAEQAMKMATESDSRLARGQGGILEGIPLGIKDLFATQGVHTQACSYILDGFKPPYESTVTANLWRDGAIMLGKLNMDEFAMGSSNETSYYGPVINPWRKKGSNEKLVPGGSSGGSAAAVAAQLCAGATATDTGGSIRQPAAFTGTVGIKPTYGRCSRWGVIAFASSLDQAGPIGRNVRDCAILLKSMASFDEKDSTSVNLPVPDYENYIGQSIKGMEIGVPKEYYLEGMASEIVELWQKGINCLKEAGAKIIDISLPHTKYALPAYYIVAPAEASSNLARYDGVRFGLRVPGKDAIEMYENTRSAGFGDEVKRRILIGTYVLSSGYYDAYYLQAQKVRTLVKRDFDQCFASGIDAILTPATPTPAFGIADEKIKNDTVAMYLNDIFTVPVNMAGLPGISVPSGLSSTGLPLGLQLIGKPFAEEVIFQIAHIIEQAIGTFSTEKWWTQQ</sequence>
<reference key="1">
    <citation type="journal article" date="2004" name="Proc. Natl. Acad. Sci. U.S.A.">
        <title>The louse-borne human pathogen Bartonella quintana is a genomic derivative of the zoonotic agent Bartonella henselae.</title>
        <authorList>
            <person name="Alsmark U.C.M."/>
            <person name="Frank A.C."/>
            <person name="Karlberg E.O."/>
            <person name="Legault B.-A."/>
            <person name="Ardell D.H."/>
            <person name="Canbaeck B."/>
            <person name="Eriksson A.-S."/>
            <person name="Naeslund A.K."/>
            <person name="Handley S.A."/>
            <person name="Huvet M."/>
            <person name="La Scola B."/>
            <person name="Holmberg M."/>
            <person name="Andersson S.G.E."/>
        </authorList>
    </citation>
    <scope>NUCLEOTIDE SEQUENCE [LARGE SCALE GENOMIC DNA]</scope>
    <source>
        <strain>Toulouse</strain>
    </source>
</reference>
<keyword id="KW-0067">ATP-binding</keyword>
<keyword id="KW-0436">Ligase</keyword>
<keyword id="KW-0547">Nucleotide-binding</keyword>
<keyword id="KW-0648">Protein biosynthesis</keyword>
<evidence type="ECO:0000255" key="1">
    <source>
        <dbReference type="HAMAP-Rule" id="MF_00120"/>
    </source>
</evidence>
<name>GATA_BARQU</name>
<comment type="function">
    <text evidence="1">Allows the formation of correctly charged Gln-tRNA(Gln) through the transamidation of misacylated Glu-tRNA(Gln) in organisms which lack glutaminyl-tRNA synthetase. The reaction takes place in the presence of glutamine and ATP through an activated gamma-phospho-Glu-tRNA(Gln).</text>
</comment>
<comment type="catalytic activity">
    <reaction evidence="1">
        <text>L-glutamyl-tRNA(Gln) + L-glutamine + ATP + H2O = L-glutaminyl-tRNA(Gln) + L-glutamate + ADP + phosphate + H(+)</text>
        <dbReference type="Rhea" id="RHEA:17521"/>
        <dbReference type="Rhea" id="RHEA-COMP:9681"/>
        <dbReference type="Rhea" id="RHEA-COMP:9684"/>
        <dbReference type="ChEBI" id="CHEBI:15377"/>
        <dbReference type="ChEBI" id="CHEBI:15378"/>
        <dbReference type="ChEBI" id="CHEBI:29985"/>
        <dbReference type="ChEBI" id="CHEBI:30616"/>
        <dbReference type="ChEBI" id="CHEBI:43474"/>
        <dbReference type="ChEBI" id="CHEBI:58359"/>
        <dbReference type="ChEBI" id="CHEBI:78520"/>
        <dbReference type="ChEBI" id="CHEBI:78521"/>
        <dbReference type="ChEBI" id="CHEBI:456216"/>
        <dbReference type="EC" id="6.3.5.7"/>
    </reaction>
</comment>
<comment type="subunit">
    <text evidence="1">Heterotrimer of A, B and C subunits.</text>
</comment>
<comment type="similarity">
    <text evidence="1">Belongs to the amidase family. GatA subfamily.</text>
</comment>
<organism>
    <name type="scientific">Bartonella quintana (strain Toulouse)</name>
    <name type="common">Rochalimaea quintana</name>
    <dbReference type="NCBI Taxonomy" id="283165"/>
    <lineage>
        <taxon>Bacteria</taxon>
        <taxon>Pseudomonadati</taxon>
        <taxon>Pseudomonadota</taxon>
        <taxon>Alphaproteobacteria</taxon>
        <taxon>Hyphomicrobiales</taxon>
        <taxon>Bartonellaceae</taxon>
        <taxon>Bartonella</taxon>
    </lineage>
</organism>
<protein>
    <recommendedName>
        <fullName evidence="1">Glutamyl-tRNA(Gln) amidotransferase subunit A</fullName>
        <shortName evidence="1">Glu-ADT subunit A</shortName>
        <ecNumber evidence="1">6.3.5.7</ecNumber>
    </recommendedName>
</protein>
<gene>
    <name evidence="1" type="primary">gatA</name>
    <name type="ordered locus">BQ06340</name>
</gene>
<accession>Q6FZS9</accession>